<protein>
    <recommendedName>
        <fullName evidence="1">Tryptophan synthase beta chain</fullName>
        <ecNumber evidence="1">4.2.1.20</ecNumber>
    </recommendedName>
</protein>
<accession>Q9KST6</accession>
<organism>
    <name type="scientific">Vibrio cholerae serotype O1 (strain ATCC 39315 / El Tor Inaba N16961)</name>
    <dbReference type="NCBI Taxonomy" id="243277"/>
    <lineage>
        <taxon>Bacteria</taxon>
        <taxon>Pseudomonadati</taxon>
        <taxon>Pseudomonadota</taxon>
        <taxon>Gammaproteobacteria</taxon>
        <taxon>Vibrionales</taxon>
        <taxon>Vibrionaceae</taxon>
        <taxon>Vibrio</taxon>
    </lineage>
</organism>
<keyword id="KW-0028">Amino-acid biosynthesis</keyword>
<keyword id="KW-0057">Aromatic amino acid biosynthesis</keyword>
<keyword id="KW-0456">Lyase</keyword>
<keyword id="KW-0663">Pyridoxal phosphate</keyword>
<keyword id="KW-1185">Reference proteome</keyword>
<keyword id="KW-0822">Tryptophan biosynthesis</keyword>
<feature type="chain" id="PRO_0000099017" description="Tryptophan synthase beta chain">
    <location>
        <begin position="1"/>
        <end position="396"/>
    </location>
</feature>
<feature type="modified residue" description="N6-(pyridoxal phosphate)lysine" evidence="1">
    <location>
        <position position="86"/>
    </location>
</feature>
<proteinExistence type="inferred from homology"/>
<sequence>MAKLNAYFGEFGGQFVPQILVPALDQLEQAFIDAQQDDAFRAEFMSLLQEYAGRPTALTLTQNITKGTKTKLYLKREDLLHGGAHKTNQVLGQALLAKRMGKHEIIAETGAGQHGVATALACALLGLKCRVYMGAKDVERQSPNVFRMRLMGATVIPVHSGSATLKDACNEALRDWSASYETAHYLLGTAAGPHPFPTIVREFQRIIGEETKNQILAREGRLPDAVIACVGGGSNAIGMFADFIEEESVRLIGIEPAGKGIHTHQHGAPLKHGKTGIFFGMKAPLMQDEHGQVEESYSVSAGLDFPSVGPQHAYLNAIGRAEYESITDDEALDAFQALARNEGIIPALESSHALAHAIKMAYAEPDKEQLLVVNLSGRGDKDIFTVHKLLEDKGAL</sequence>
<dbReference type="EC" id="4.2.1.20" evidence="1"/>
<dbReference type="EMBL" id="AE003852">
    <property type="protein sequence ID" value="AAF94329.1"/>
    <property type="molecule type" value="Genomic_DNA"/>
</dbReference>
<dbReference type="PIR" id="E82232">
    <property type="entry name" value="E82232"/>
</dbReference>
<dbReference type="RefSeq" id="NP_230815.1">
    <property type="nucleotide sequence ID" value="NC_002505.1"/>
</dbReference>
<dbReference type="RefSeq" id="WP_001096418.1">
    <property type="nucleotide sequence ID" value="NZ_LT906614.1"/>
</dbReference>
<dbReference type="SMR" id="Q9KST6"/>
<dbReference type="STRING" id="243277.VC_1170"/>
<dbReference type="DNASU" id="2614603"/>
<dbReference type="EnsemblBacteria" id="AAF94329">
    <property type="protein sequence ID" value="AAF94329"/>
    <property type="gene ID" value="VC_1170"/>
</dbReference>
<dbReference type="KEGG" id="vch:VC_1170"/>
<dbReference type="PATRIC" id="fig|243277.26.peg.1119"/>
<dbReference type="eggNOG" id="COG0133">
    <property type="taxonomic scope" value="Bacteria"/>
</dbReference>
<dbReference type="HOGENOM" id="CLU_016734_3_1_6"/>
<dbReference type="UniPathway" id="UPA00035">
    <property type="reaction ID" value="UER00044"/>
</dbReference>
<dbReference type="Proteomes" id="UP000000584">
    <property type="component" value="Chromosome 1"/>
</dbReference>
<dbReference type="GO" id="GO:0005737">
    <property type="term" value="C:cytoplasm"/>
    <property type="evidence" value="ECO:0000318"/>
    <property type="project" value="GO_Central"/>
</dbReference>
<dbReference type="GO" id="GO:0004834">
    <property type="term" value="F:tryptophan synthase activity"/>
    <property type="evidence" value="ECO:0007669"/>
    <property type="project" value="UniProtKB-UniRule"/>
</dbReference>
<dbReference type="GO" id="GO:0000162">
    <property type="term" value="P:L-tryptophan biosynthetic process"/>
    <property type="evidence" value="ECO:0000318"/>
    <property type="project" value="GO_Central"/>
</dbReference>
<dbReference type="CDD" id="cd06446">
    <property type="entry name" value="Trp-synth_B"/>
    <property type="match status" value="1"/>
</dbReference>
<dbReference type="FunFam" id="3.40.50.1100:FF:000001">
    <property type="entry name" value="Tryptophan synthase beta chain"/>
    <property type="match status" value="1"/>
</dbReference>
<dbReference type="FunFam" id="3.40.50.1100:FF:000004">
    <property type="entry name" value="Tryptophan synthase beta chain"/>
    <property type="match status" value="1"/>
</dbReference>
<dbReference type="Gene3D" id="3.40.50.1100">
    <property type="match status" value="2"/>
</dbReference>
<dbReference type="HAMAP" id="MF_00133">
    <property type="entry name" value="Trp_synth_beta"/>
    <property type="match status" value="1"/>
</dbReference>
<dbReference type="InterPro" id="IPR006653">
    <property type="entry name" value="Trp_synth_b_CS"/>
</dbReference>
<dbReference type="InterPro" id="IPR006654">
    <property type="entry name" value="Trp_synth_beta"/>
</dbReference>
<dbReference type="InterPro" id="IPR023026">
    <property type="entry name" value="Trp_synth_beta/beta-like"/>
</dbReference>
<dbReference type="InterPro" id="IPR001926">
    <property type="entry name" value="TrpB-like_PALP"/>
</dbReference>
<dbReference type="InterPro" id="IPR036052">
    <property type="entry name" value="TrpB-like_PALP_sf"/>
</dbReference>
<dbReference type="NCBIfam" id="TIGR00263">
    <property type="entry name" value="trpB"/>
    <property type="match status" value="1"/>
</dbReference>
<dbReference type="PANTHER" id="PTHR48077:SF3">
    <property type="entry name" value="TRYPTOPHAN SYNTHASE"/>
    <property type="match status" value="1"/>
</dbReference>
<dbReference type="PANTHER" id="PTHR48077">
    <property type="entry name" value="TRYPTOPHAN SYNTHASE-RELATED"/>
    <property type="match status" value="1"/>
</dbReference>
<dbReference type="Pfam" id="PF00291">
    <property type="entry name" value="PALP"/>
    <property type="match status" value="1"/>
</dbReference>
<dbReference type="PIRSF" id="PIRSF001413">
    <property type="entry name" value="Trp_syn_beta"/>
    <property type="match status" value="1"/>
</dbReference>
<dbReference type="SUPFAM" id="SSF53686">
    <property type="entry name" value="Tryptophan synthase beta subunit-like PLP-dependent enzymes"/>
    <property type="match status" value="1"/>
</dbReference>
<dbReference type="PROSITE" id="PS00168">
    <property type="entry name" value="TRP_SYNTHASE_BETA"/>
    <property type="match status" value="1"/>
</dbReference>
<gene>
    <name evidence="1" type="primary">trpB</name>
    <name type="ordered locus">VC_1170</name>
</gene>
<comment type="function">
    <text evidence="1">The beta subunit is responsible for the synthesis of L-tryptophan from indole and L-serine.</text>
</comment>
<comment type="catalytic activity">
    <reaction evidence="1">
        <text>(1S,2R)-1-C-(indol-3-yl)glycerol 3-phosphate + L-serine = D-glyceraldehyde 3-phosphate + L-tryptophan + H2O</text>
        <dbReference type="Rhea" id="RHEA:10532"/>
        <dbReference type="ChEBI" id="CHEBI:15377"/>
        <dbReference type="ChEBI" id="CHEBI:33384"/>
        <dbReference type="ChEBI" id="CHEBI:57912"/>
        <dbReference type="ChEBI" id="CHEBI:58866"/>
        <dbReference type="ChEBI" id="CHEBI:59776"/>
        <dbReference type="EC" id="4.2.1.20"/>
    </reaction>
</comment>
<comment type="cofactor">
    <cofactor evidence="1">
        <name>pyridoxal 5'-phosphate</name>
        <dbReference type="ChEBI" id="CHEBI:597326"/>
    </cofactor>
</comment>
<comment type="pathway">
    <text evidence="1">Amino-acid biosynthesis; L-tryptophan biosynthesis; L-tryptophan from chorismate: step 5/5.</text>
</comment>
<comment type="subunit">
    <text evidence="1">Tetramer of two alpha and two beta chains.</text>
</comment>
<comment type="similarity">
    <text evidence="1">Belongs to the TrpB family.</text>
</comment>
<name>TRPB_VIBCH</name>
<reference key="1">
    <citation type="journal article" date="2000" name="Nature">
        <title>DNA sequence of both chromosomes of the cholera pathogen Vibrio cholerae.</title>
        <authorList>
            <person name="Heidelberg J.F."/>
            <person name="Eisen J.A."/>
            <person name="Nelson W.C."/>
            <person name="Clayton R.A."/>
            <person name="Gwinn M.L."/>
            <person name="Dodson R.J."/>
            <person name="Haft D.H."/>
            <person name="Hickey E.K."/>
            <person name="Peterson J.D."/>
            <person name="Umayam L.A."/>
            <person name="Gill S.R."/>
            <person name="Nelson K.E."/>
            <person name="Read T.D."/>
            <person name="Tettelin H."/>
            <person name="Richardson D.L."/>
            <person name="Ermolaeva M.D."/>
            <person name="Vamathevan J.J."/>
            <person name="Bass S."/>
            <person name="Qin H."/>
            <person name="Dragoi I."/>
            <person name="Sellers P."/>
            <person name="McDonald L.A."/>
            <person name="Utterback T.R."/>
            <person name="Fleischmann R.D."/>
            <person name="Nierman W.C."/>
            <person name="White O."/>
            <person name="Salzberg S.L."/>
            <person name="Smith H.O."/>
            <person name="Colwell R.R."/>
            <person name="Mekalanos J.J."/>
            <person name="Venter J.C."/>
            <person name="Fraser C.M."/>
        </authorList>
    </citation>
    <scope>NUCLEOTIDE SEQUENCE [LARGE SCALE GENOMIC DNA]</scope>
    <source>
        <strain>ATCC 39315 / El Tor Inaba N16961</strain>
    </source>
</reference>
<evidence type="ECO:0000255" key="1">
    <source>
        <dbReference type="HAMAP-Rule" id="MF_00133"/>
    </source>
</evidence>